<feature type="chain" id="PRO_1000082756" description="Putative pre-16S rRNA nuclease">
    <location>
        <begin position="1"/>
        <end position="142"/>
    </location>
</feature>
<dbReference type="EC" id="3.1.-.-" evidence="1"/>
<dbReference type="EMBL" id="CP000703">
    <property type="protein sequence ID" value="ABQ49464.1"/>
    <property type="molecule type" value="Genomic_DNA"/>
</dbReference>
<dbReference type="SMR" id="A5ITE1"/>
<dbReference type="KEGG" id="saj:SaurJH9_1673"/>
<dbReference type="HOGENOM" id="CLU_098240_2_0_9"/>
<dbReference type="GO" id="GO:0005829">
    <property type="term" value="C:cytosol"/>
    <property type="evidence" value="ECO:0007669"/>
    <property type="project" value="TreeGrafter"/>
</dbReference>
<dbReference type="GO" id="GO:0004518">
    <property type="term" value="F:nuclease activity"/>
    <property type="evidence" value="ECO:0007669"/>
    <property type="project" value="UniProtKB-KW"/>
</dbReference>
<dbReference type="GO" id="GO:0000967">
    <property type="term" value="P:rRNA 5'-end processing"/>
    <property type="evidence" value="ECO:0007669"/>
    <property type="project" value="UniProtKB-UniRule"/>
</dbReference>
<dbReference type="CDD" id="cd16964">
    <property type="entry name" value="YqgF"/>
    <property type="match status" value="1"/>
</dbReference>
<dbReference type="FunFam" id="3.30.420.140:FF:000003">
    <property type="entry name" value="Putative pre-16S rRNA nuclease"/>
    <property type="match status" value="1"/>
</dbReference>
<dbReference type="Gene3D" id="3.30.420.140">
    <property type="entry name" value="YqgF/RNase H-like domain"/>
    <property type="match status" value="1"/>
</dbReference>
<dbReference type="HAMAP" id="MF_00651">
    <property type="entry name" value="Nuclease_YqgF"/>
    <property type="match status" value="1"/>
</dbReference>
<dbReference type="InterPro" id="IPR012337">
    <property type="entry name" value="RNaseH-like_sf"/>
</dbReference>
<dbReference type="InterPro" id="IPR005227">
    <property type="entry name" value="YqgF"/>
</dbReference>
<dbReference type="InterPro" id="IPR006641">
    <property type="entry name" value="YqgF/RNaseH-like_dom"/>
</dbReference>
<dbReference type="InterPro" id="IPR037027">
    <property type="entry name" value="YqgF/RNaseH-like_dom_sf"/>
</dbReference>
<dbReference type="NCBIfam" id="TIGR00250">
    <property type="entry name" value="RNAse_H_YqgF"/>
    <property type="match status" value="1"/>
</dbReference>
<dbReference type="PANTHER" id="PTHR33317">
    <property type="entry name" value="POLYNUCLEOTIDYL TRANSFERASE, RIBONUCLEASE H-LIKE SUPERFAMILY PROTEIN"/>
    <property type="match status" value="1"/>
</dbReference>
<dbReference type="PANTHER" id="PTHR33317:SF4">
    <property type="entry name" value="POLYNUCLEOTIDYL TRANSFERASE, RIBONUCLEASE H-LIKE SUPERFAMILY PROTEIN"/>
    <property type="match status" value="1"/>
</dbReference>
<dbReference type="Pfam" id="PF03652">
    <property type="entry name" value="RuvX"/>
    <property type="match status" value="1"/>
</dbReference>
<dbReference type="SMART" id="SM00732">
    <property type="entry name" value="YqgFc"/>
    <property type="match status" value="1"/>
</dbReference>
<dbReference type="SUPFAM" id="SSF53098">
    <property type="entry name" value="Ribonuclease H-like"/>
    <property type="match status" value="1"/>
</dbReference>
<name>YQGF_STAA9</name>
<comment type="function">
    <text evidence="1">Could be a nuclease involved in processing of the 5'-end of pre-16S rRNA.</text>
</comment>
<comment type="subcellular location">
    <subcellularLocation>
        <location evidence="1">Cytoplasm</location>
    </subcellularLocation>
</comment>
<comment type="similarity">
    <text evidence="1">Belongs to the YqgF nuclease family.</text>
</comment>
<proteinExistence type="inferred from homology"/>
<keyword id="KW-0963">Cytoplasm</keyword>
<keyword id="KW-0378">Hydrolase</keyword>
<keyword id="KW-0540">Nuclease</keyword>
<keyword id="KW-0690">Ribosome biogenesis</keyword>
<reference key="1">
    <citation type="submission" date="2007-05" db="EMBL/GenBank/DDBJ databases">
        <title>Complete sequence of chromosome of Staphylococcus aureus subsp. aureus JH9.</title>
        <authorList>
            <consortium name="US DOE Joint Genome Institute"/>
            <person name="Copeland A."/>
            <person name="Lucas S."/>
            <person name="Lapidus A."/>
            <person name="Barry K."/>
            <person name="Detter J.C."/>
            <person name="Glavina del Rio T."/>
            <person name="Hammon N."/>
            <person name="Israni S."/>
            <person name="Pitluck S."/>
            <person name="Chain P."/>
            <person name="Malfatti S."/>
            <person name="Shin M."/>
            <person name="Vergez L."/>
            <person name="Schmutz J."/>
            <person name="Larimer F."/>
            <person name="Land M."/>
            <person name="Hauser L."/>
            <person name="Kyrpides N."/>
            <person name="Kim E."/>
            <person name="Tomasz A."/>
            <person name="Richardson P."/>
        </authorList>
    </citation>
    <scope>NUCLEOTIDE SEQUENCE [LARGE SCALE GENOMIC DNA]</scope>
    <source>
        <strain>JH9</strain>
    </source>
</reference>
<evidence type="ECO:0000255" key="1">
    <source>
        <dbReference type="HAMAP-Rule" id="MF_00651"/>
    </source>
</evidence>
<organism>
    <name type="scientific">Staphylococcus aureus (strain JH9)</name>
    <dbReference type="NCBI Taxonomy" id="359786"/>
    <lineage>
        <taxon>Bacteria</taxon>
        <taxon>Bacillati</taxon>
        <taxon>Bacillota</taxon>
        <taxon>Bacilli</taxon>
        <taxon>Bacillales</taxon>
        <taxon>Staphylococcaceae</taxon>
        <taxon>Staphylococcus</taxon>
    </lineage>
</organism>
<sequence length="142" mass="15865">MLQHKILGLDVGSRTVGIAISDIMGWTAQGLDTLRINEENNELGIDQLVDIIKKHNVGTVVIGLPKNMNNSIGFRGEASLTYKEKLLEAYPSIEIVMWDERLSTMAAERSLLEADVSRQKRKQVIDKMAAVFILQGYLDSLH</sequence>
<gene>
    <name type="ordered locus">SaurJH9_1673</name>
</gene>
<accession>A5ITE1</accession>
<protein>
    <recommendedName>
        <fullName evidence="1">Putative pre-16S rRNA nuclease</fullName>
        <ecNumber evidence="1">3.1.-.-</ecNumber>
    </recommendedName>
</protein>